<evidence type="ECO:0000255" key="1">
    <source>
        <dbReference type="HAMAP-Rule" id="MF_01083"/>
    </source>
</evidence>
<feature type="chain" id="PRO_0000218178" description="Glutarate 2-hydroxylase">
    <location>
        <begin position="1"/>
        <end position="325"/>
    </location>
</feature>
<feature type="binding site" evidence="1">
    <location>
        <position position="160"/>
    </location>
    <ligand>
        <name>Fe cation</name>
        <dbReference type="ChEBI" id="CHEBI:24875"/>
    </ligand>
</feature>
<feature type="binding site" evidence="1">
    <location>
        <position position="162"/>
    </location>
    <ligand>
        <name>Fe cation</name>
        <dbReference type="ChEBI" id="CHEBI:24875"/>
    </ligand>
</feature>
<feature type="binding site" evidence="1">
    <location>
        <position position="292"/>
    </location>
    <ligand>
        <name>Fe cation</name>
        <dbReference type="ChEBI" id="CHEBI:24875"/>
    </ligand>
</feature>
<keyword id="KW-0223">Dioxygenase</keyword>
<keyword id="KW-0408">Iron</keyword>
<keyword id="KW-0479">Metal-binding</keyword>
<keyword id="KW-0560">Oxidoreductase</keyword>
<keyword id="KW-1185">Reference proteome</keyword>
<reference key="1">
    <citation type="journal article" date="2002" name="Proc. Natl. Acad. Sci. U.S.A.">
        <title>Extensive mosaic structure revealed by the complete genome sequence of uropathogenic Escherichia coli.</title>
        <authorList>
            <person name="Welch R.A."/>
            <person name="Burland V."/>
            <person name="Plunkett G. III"/>
            <person name="Redford P."/>
            <person name="Roesch P."/>
            <person name="Rasko D."/>
            <person name="Buckles E.L."/>
            <person name="Liou S.-R."/>
            <person name="Boutin A."/>
            <person name="Hackett J."/>
            <person name="Stroud D."/>
            <person name="Mayhew G.F."/>
            <person name="Rose D.J."/>
            <person name="Zhou S."/>
            <person name="Schwartz D.C."/>
            <person name="Perna N.T."/>
            <person name="Mobley H.L.T."/>
            <person name="Donnenberg M.S."/>
            <person name="Blattner F.R."/>
        </authorList>
    </citation>
    <scope>NUCLEOTIDE SEQUENCE [LARGE SCALE GENOMIC DNA]</scope>
    <source>
        <strain>CFT073 / ATCC 700928 / UPEC</strain>
    </source>
</reference>
<sequence>MNALTAVQNNAVDSGQDYSGFTLIPSAQSPRLLELTFTEQTTKQFLEQVAEWPVQALEYKSFLRFRVGKILDDLCANQLQPLLLKTLLNRAEGALLINAVGIDDVAQADEMVKLATAVAHLIGRSNFDAMSGQYYARFVVKNVDNSDSYLRQPHRVMELHNDGTYVEEITDYVLMMKIDEQNMQGGNSLLLHLDDWEHLDHFFRHPLARRPMRFAAPPSKNVSKDVFHPVFDVDQQGRPVMRYIDQFVQPKDFEEGVWLSELSDAIETSKGILSVPVPVGKFLLINNLFWLHGRDRFTPHPDLRRELMRQRGYFAYATHHYQTHQ</sequence>
<name>GLAH_ECOL6</name>
<proteinExistence type="inferred from homology"/>
<gene>
    <name evidence="1" type="primary">glaH</name>
    <name type="ordered locus">c3207</name>
</gene>
<protein>
    <recommendedName>
        <fullName evidence="1">Glutarate 2-hydroxylase</fullName>
        <shortName evidence="1">G-2-H</shortName>
        <ecNumber evidence="1">1.14.11.64</ecNumber>
    </recommendedName>
</protein>
<dbReference type="EC" id="1.14.11.64" evidence="1"/>
<dbReference type="EMBL" id="AE014075">
    <property type="protein sequence ID" value="AAN81659.1"/>
    <property type="molecule type" value="Genomic_DNA"/>
</dbReference>
<dbReference type="RefSeq" id="WP_000993109.1">
    <property type="nucleotide sequence ID" value="NZ_CP051263.1"/>
</dbReference>
<dbReference type="SMR" id="Q8FES6"/>
<dbReference type="STRING" id="199310.c3207"/>
<dbReference type="KEGG" id="ecc:c3207"/>
<dbReference type="eggNOG" id="ENOG502Z8GB">
    <property type="taxonomic scope" value="Bacteria"/>
</dbReference>
<dbReference type="HOGENOM" id="CLU_075277_0_0_6"/>
<dbReference type="BioCyc" id="ECOL199310:C3207-MONOMER"/>
<dbReference type="Proteomes" id="UP000001410">
    <property type="component" value="Chromosome"/>
</dbReference>
<dbReference type="GO" id="GO:0008198">
    <property type="term" value="F:ferrous iron binding"/>
    <property type="evidence" value="ECO:0007669"/>
    <property type="project" value="UniProtKB-UniRule"/>
</dbReference>
<dbReference type="GO" id="GO:0106343">
    <property type="term" value="F:glutarate dioxygenase activity"/>
    <property type="evidence" value="ECO:0007669"/>
    <property type="project" value="UniProtKB-EC"/>
</dbReference>
<dbReference type="GO" id="GO:0050498">
    <property type="term" value="F:oxidoreductase activity, acting on paired donors, with incorporation or reduction of molecular oxygen, with 2-oxoglutarate as one donor, and the other dehydrogenated"/>
    <property type="evidence" value="ECO:0007669"/>
    <property type="project" value="UniProtKB-UniRule"/>
</dbReference>
<dbReference type="GO" id="GO:0019477">
    <property type="term" value="P:L-lysine catabolic process"/>
    <property type="evidence" value="ECO:0007669"/>
    <property type="project" value="UniProtKB-UniRule"/>
</dbReference>
<dbReference type="CDD" id="cd00250">
    <property type="entry name" value="CAS_like"/>
    <property type="match status" value="1"/>
</dbReference>
<dbReference type="FunFam" id="3.60.130.10:FF:000004">
    <property type="entry name" value="Glutarate 2-hydroxylase"/>
    <property type="match status" value="1"/>
</dbReference>
<dbReference type="Gene3D" id="3.60.130.10">
    <property type="entry name" value="Clavaminate synthase-like"/>
    <property type="match status" value="1"/>
</dbReference>
<dbReference type="HAMAP" id="MF_01083">
    <property type="entry name" value="glutarate_hydroxylase"/>
    <property type="match status" value="1"/>
</dbReference>
<dbReference type="InterPro" id="IPR015038">
    <property type="entry name" value="GlaH"/>
</dbReference>
<dbReference type="InterPro" id="IPR042098">
    <property type="entry name" value="TauD-like_sf"/>
</dbReference>
<dbReference type="NCBIfam" id="NF002814">
    <property type="entry name" value="PRK02963.1"/>
    <property type="match status" value="1"/>
</dbReference>
<dbReference type="Pfam" id="PF08943">
    <property type="entry name" value="CsiD"/>
    <property type="match status" value="1"/>
</dbReference>
<dbReference type="SUPFAM" id="SSF51197">
    <property type="entry name" value="Clavaminate synthase-like"/>
    <property type="match status" value="1"/>
</dbReference>
<accession>Q8FES6</accession>
<comment type="function">
    <text evidence="1">Acts as an alpha-ketoglutarate-dependent dioxygenase catalyzing hydroxylation of glutarate (GA) to L-2-hydroxyglutarate (L2HG). Functions in a L-lysine degradation pathway that proceeds via cadaverine, glutarate and L-2-hydroxyglutarate.</text>
</comment>
<comment type="catalytic activity">
    <reaction evidence="1">
        <text>glutarate + 2-oxoglutarate + O2 = (S)-2-hydroxyglutarate + succinate + CO2</text>
        <dbReference type="Rhea" id="RHEA:13821"/>
        <dbReference type="ChEBI" id="CHEBI:15379"/>
        <dbReference type="ChEBI" id="CHEBI:16526"/>
        <dbReference type="ChEBI" id="CHEBI:16782"/>
        <dbReference type="ChEBI" id="CHEBI:16810"/>
        <dbReference type="ChEBI" id="CHEBI:30031"/>
        <dbReference type="ChEBI" id="CHEBI:30921"/>
        <dbReference type="EC" id="1.14.11.64"/>
    </reaction>
    <physiologicalReaction direction="left-to-right" evidence="1">
        <dbReference type="Rhea" id="RHEA:13822"/>
    </physiologicalReaction>
</comment>
<comment type="cofactor">
    <cofactor evidence="1">
        <name>Fe(2+)</name>
        <dbReference type="ChEBI" id="CHEBI:29033"/>
    </cofactor>
    <text evidence="1">Binds 1 Fe(2+) ion per subunit.</text>
</comment>
<comment type="pathway">
    <text evidence="1">Amino-acid degradation.</text>
</comment>
<comment type="subunit">
    <text evidence="1">Homotetramer.</text>
</comment>
<comment type="similarity">
    <text evidence="1">Belongs to the glutarate hydroxylase family.</text>
</comment>
<organism>
    <name type="scientific">Escherichia coli O6:H1 (strain CFT073 / ATCC 700928 / UPEC)</name>
    <dbReference type="NCBI Taxonomy" id="199310"/>
    <lineage>
        <taxon>Bacteria</taxon>
        <taxon>Pseudomonadati</taxon>
        <taxon>Pseudomonadota</taxon>
        <taxon>Gammaproteobacteria</taxon>
        <taxon>Enterobacterales</taxon>
        <taxon>Enterobacteriaceae</taxon>
        <taxon>Escherichia</taxon>
    </lineage>
</organism>